<organism>
    <name type="scientific">Haemophilus influenzae (strain 86-028NP)</name>
    <dbReference type="NCBI Taxonomy" id="281310"/>
    <lineage>
        <taxon>Bacteria</taxon>
        <taxon>Pseudomonadati</taxon>
        <taxon>Pseudomonadota</taxon>
        <taxon>Gammaproteobacteria</taxon>
        <taxon>Pasteurellales</taxon>
        <taxon>Pasteurellaceae</taxon>
        <taxon>Haemophilus</taxon>
    </lineage>
</organism>
<feature type="chain" id="PRO_0000190704" description="UPF0758 protein NTHI1125">
    <location>
        <begin position="1"/>
        <end position="221"/>
    </location>
</feature>
<feature type="domain" description="MPN" evidence="1">
    <location>
        <begin position="98"/>
        <end position="221"/>
    </location>
</feature>
<feature type="short sequence motif" description="JAMM motif" evidence="1">
    <location>
        <begin position="170"/>
        <end position="183"/>
    </location>
</feature>
<feature type="binding site" evidence="1">
    <location>
        <position position="170"/>
    </location>
    <ligand>
        <name>Zn(2+)</name>
        <dbReference type="ChEBI" id="CHEBI:29105"/>
        <note>catalytic</note>
    </ligand>
</feature>
<feature type="binding site" evidence="1">
    <location>
        <position position="172"/>
    </location>
    <ligand>
        <name>Zn(2+)</name>
        <dbReference type="ChEBI" id="CHEBI:29105"/>
        <note>catalytic</note>
    </ligand>
</feature>
<feature type="binding site" evidence="1">
    <location>
        <position position="183"/>
    </location>
    <ligand>
        <name>Zn(2+)</name>
        <dbReference type="ChEBI" id="CHEBI:29105"/>
        <note>catalytic</note>
    </ligand>
</feature>
<gene>
    <name type="ordered locus">NTHI1125</name>
</gene>
<keyword id="KW-0378">Hydrolase</keyword>
<keyword id="KW-0479">Metal-binding</keyword>
<keyword id="KW-0482">Metalloprotease</keyword>
<keyword id="KW-0645">Protease</keyword>
<keyword id="KW-0862">Zinc</keyword>
<evidence type="ECO:0000255" key="1">
    <source>
        <dbReference type="PROSITE-ProRule" id="PRU01182"/>
    </source>
</evidence>
<evidence type="ECO:0000305" key="2"/>
<reference key="1">
    <citation type="journal article" date="2005" name="J. Bacteriol.">
        <title>Genomic sequence of an otitis media isolate of nontypeable Haemophilus influenzae: comparative study with H. influenzae serotype d, strain KW20.</title>
        <authorList>
            <person name="Harrison A."/>
            <person name="Dyer D.W."/>
            <person name="Gillaspy A."/>
            <person name="Ray W.C."/>
            <person name="Mungur R."/>
            <person name="Carson M.B."/>
            <person name="Zhong H."/>
            <person name="Gipson J."/>
            <person name="Gipson M."/>
            <person name="Johnson L.S."/>
            <person name="Lewis L."/>
            <person name="Bakaletz L.O."/>
            <person name="Munson R.S. Jr."/>
        </authorList>
    </citation>
    <scope>NUCLEOTIDE SEQUENCE [LARGE SCALE GENOMIC DNA]</scope>
    <source>
        <strain>86-028NP</strain>
    </source>
</reference>
<proteinExistence type="inferred from homology"/>
<name>Y1125_HAEI8</name>
<sequence length="221" mass="25057">MENNDELMPREKLLAFGAKALSDYELLAIFLRTGIKDCPVMSLSKNVLTHFGSLHALLSADKKAFCSVKGLGITQFIQLQAITEMTKRYLKQEMLSTPIINDLETVKLFLLTELQHEEREVFMVLFLDNQHRLIKKERLFLGTINVSAVYPREIIKEALYCNAAALILAHNHPSGITEPSYSDQLITKKIQDAAELMEIRVLDHLIVGKSDCYSFAENCLL</sequence>
<dbReference type="EMBL" id="CP000057">
    <property type="protein sequence ID" value="AAX87992.1"/>
    <property type="status" value="ALT_INIT"/>
    <property type="molecule type" value="Genomic_DNA"/>
</dbReference>
<dbReference type="RefSeq" id="WP_013526173.1">
    <property type="nucleotide sequence ID" value="NC_007146.2"/>
</dbReference>
<dbReference type="SMR" id="Q4QLV5"/>
<dbReference type="GeneID" id="93219991"/>
<dbReference type="KEGG" id="hit:NTHI1125"/>
<dbReference type="HOGENOM" id="CLU_073529_0_2_6"/>
<dbReference type="Proteomes" id="UP000002525">
    <property type="component" value="Chromosome"/>
</dbReference>
<dbReference type="GO" id="GO:0046872">
    <property type="term" value="F:metal ion binding"/>
    <property type="evidence" value="ECO:0007669"/>
    <property type="project" value="UniProtKB-KW"/>
</dbReference>
<dbReference type="GO" id="GO:0008237">
    <property type="term" value="F:metallopeptidase activity"/>
    <property type="evidence" value="ECO:0007669"/>
    <property type="project" value="UniProtKB-KW"/>
</dbReference>
<dbReference type="GO" id="GO:0006508">
    <property type="term" value="P:proteolysis"/>
    <property type="evidence" value="ECO:0007669"/>
    <property type="project" value="UniProtKB-KW"/>
</dbReference>
<dbReference type="CDD" id="cd08071">
    <property type="entry name" value="MPN_DUF2466"/>
    <property type="match status" value="1"/>
</dbReference>
<dbReference type="Gene3D" id="3.40.140.10">
    <property type="entry name" value="Cytidine Deaminase, domain 2"/>
    <property type="match status" value="1"/>
</dbReference>
<dbReference type="InterPro" id="IPR037518">
    <property type="entry name" value="MPN"/>
</dbReference>
<dbReference type="InterPro" id="IPR025657">
    <property type="entry name" value="RadC_JAB"/>
</dbReference>
<dbReference type="InterPro" id="IPR010994">
    <property type="entry name" value="RuvA_2-like"/>
</dbReference>
<dbReference type="InterPro" id="IPR001405">
    <property type="entry name" value="UPF0758"/>
</dbReference>
<dbReference type="InterPro" id="IPR020891">
    <property type="entry name" value="UPF0758_CS"/>
</dbReference>
<dbReference type="InterPro" id="IPR046778">
    <property type="entry name" value="UPF0758_N"/>
</dbReference>
<dbReference type="NCBIfam" id="NF000642">
    <property type="entry name" value="PRK00024.1"/>
    <property type="match status" value="1"/>
</dbReference>
<dbReference type="NCBIfam" id="TIGR00608">
    <property type="entry name" value="radc"/>
    <property type="match status" value="1"/>
</dbReference>
<dbReference type="PANTHER" id="PTHR30471">
    <property type="entry name" value="DNA REPAIR PROTEIN RADC"/>
    <property type="match status" value="1"/>
</dbReference>
<dbReference type="PANTHER" id="PTHR30471:SF3">
    <property type="entry name" value="UPF0758 PROTEIN YEES-RELATED"/>
    <property type="match status" value="1"/>
</dbReference>
<dbReference type="Pfam" id="PF04002">
    <property type="entry name" value="RadC"/>
    <property type="match status" value="1"/>
</dbReference>
<dbReference type="Pfam" id="PF20582">
    <property type="entry name" value="UPF0758_N"/>
    <property type="match status" value="1"/>
</dbReference>
<dbReference type="SUPFAM" id="SSF47781">
    <property type="entry name" value="RuvA domain 2-like"/>
    <property type="match status" value="1"/>
</dbReference>
<dbReference type="PROSITE" id="PS50249">
    <property type="entry name" value="MPN"/>
    <property type="match status" value="1"/>
</dbReference>
<dbReference type="PROSITE" id="PS01302">
    <property type="entry name" value="UPF0758"/>
    <property type="match status" value="1"/>
</dbReference>
<accession>Q4QLV5</accession>
<protein>
    <recommendedName>
        <fullName>UPF0758 protein NTHI1125</fullName>
    </recommendedName>
</protein>
<comment type="similarity">
    <text evidence="2">Belongs to the UPF0758 family.</text>
</comment>
<comment type="sequence caution" evidence="2">
    <conflict type="erroneous initiation">
        <sequence resource="EMBL-CDS" id="AAX87992"/>
    </conflict>
</comment>